<protein>
    <recommendedName>
        <fullName evidence="2">Formamidopyrimidine-DNA glycosylase</fullName>
        <shortName evidence="2">Fapy-DNA glycosylase</shortName>
        <ecNumber evidence="2">3.2.2.23</ecNumber>
    </recommendedName>
    <alternativeName>
        <fullName evidence="2">DNA-(apurinic or apyrimidinic site) lyase MutM</fullName>
        <shortName evidence="2">AP lyase MutM</shortName>
        <ecNumber evidence="2">4.2.99.18</ecNumber>
    </alternativeName>
</protein>
<name>FPG_SHEON</name>
<proteinExistence type="inferred from homology"/>
<organism>
    <name type="scientific">Shewanella oneidensis (strain ATCC 700550 / JCM 31522 / CIP 106686 / LMG 19005 / NCIMB 14063 / MR-1)</name>
    <dbReference type="NCBI Taxonomy" id="211586"/>
    <lineage>
        <taxon>Bacteria</taxon>
        <taxon>Pseudomonadati</taxon>
        <taxon>Pseudomonadota</taxon>
        <taxon>Gammaproteobacteria</taxon>
        <taxon>Alteromonadales</taxon>
        <taxon>Shewanellaceae</taxon>
        <taxon>Shewanella</taxon>
    </lineage>
</organism>
<comment type="function">
    <text evidence="2">Involved in base excision repair of DNA damaged by oxidation or by mutagenic agents. Acts as a DNA glycosylase that recognizes and removes damaged bases. Has a preference for oxidized purines, such as 7,8-dihydro-8-oxoguanine (8-oxoG). Has AP (apurinic/apyrimidinic) lyase activity and introduces nicks in the DNA strand. Cleaves the DNA backbone by beta-delta elimination to generate a single-strand break at the site of the removed base with both 3'- and 5'-phosphates.</text>
</comment>
<comment type="catalytic activity">
    <reaction evidence="2">
        <text>Hydrolysis of DNA containing ring-opened 7-methylguanine residues, releasing 2,6-diamino-4-hydroxy-5-(N-methyl)formamidopyrimidine.</text>
        <dbReference type="EC" id="3.2.2.23"/>
    </reaction>
</comment>
<comment type="catalytic activity">
    <reaction evidence="2">
        <text>2'-deoxyribonucleotide-(2'-deoxyribose 5'-phosphate)-2'-deoxyribonucleotide-DNA = a 3'-end 2'-deoxyribonucleotide-(2,3-dehydro-2,3-deoxyribose 5'-phosphate)-DNA + a 5'-end 5'-phospho-2'-deoxyribonucleoside-DNA + H(+)</text>
        <dbReference type="Rhea" id="RHEA:66592"/>
        <dbReference type="Rhea" id="RHEA-COMP:13180"/>
        <dbReference type="Rhea" id="RHEA-COMP:16897"/>
        <dbReference type="Rhea" id="RHEA-COMP:17067"/>
        <dbReference type="ChEBI" id="CHEBI:15378"/>
        <dbReference type="ChEBI" id="CHEBI:136412"/>
        <dbReference type="ChEBI" id="CHEBI:157695"/>
        <dbReference type="ChEBI" id="CHEBI:167181"/>
        <dbReference type="EC" id="4.2.99.18"/>
    </reaction>
</comment>
<comment type="cofactor">
    <cofactor evidence="2">
        <name>Zn(2+)</name>
        <dbReference type="ChEBI" id="CHEBI:29105"/>
    </cofactor>
    <text evidence="2">Binds 1 zinc ion per subunit.</text>
</comment>
<comment type="subunit">
    <text evidence="2">Monomer.</text>
</comment>
<comment type="similarity">
    <text evidence="2">Belongs to the FPG family.</text>
</comment>
<reference key="1">
    <citation type="journal article" date="2002" name="Nat. Biotechnol.">
        <title>Genome sequence of the dissimilatory metal ion-reducing bacterium Shewanella oneidensis.</title>
        <authorList>
            <person name="Heidelberg J.F."/>
            <person name="Paulsen I.T."/>
            <person name="Nelson K.E."/>
            <person name="Gaidos E.J."/>
            <person name="Nelson W.C."/>
            <person name="Read T.D."/>
            <person name="Eisen J.A."/>
            <person name="Seshadri R."/>
            <person name="Ward N.L."/>
            <person name="Methe B.A."/>
            <person name="Clayton R.A."/>
            <person name="Meyer T."/>
            <person name="Tsapin A."/>
            <person name="Scott J."/>
            <person name="Beanan M.J."/>
            <person name="Brinkac L.M."/>
            <person name="Daugherty S.C."/>
            <person name="DeBoy R.T."/>
            <person name="Dodson R.J."/>
            <person name="Durkin A.S."/>
            <person name="Haft D.H."/>
            <person name="Kolonay J.F."/>
            <person name="Madupu R."/>
            <person name="Peterson J.D."/>
            <person name="Umayam L.A."/>
            <person name="White O."/>
            <person name="Wolf A.M."/>
            <person name="Vamathevan J.J."/>
            <person name="Weidman J.F."/>
            <person name="Impraim M."/>
            <person name="Lee K."/>
            <person name="Berry K.J."/>
            <person name="Lee C."/>
            <person name="Mueller J."/>
            <person name="Khouri H.M."/>
            <person name="Gill J."/>
            <person name="Utterback T.R."/>
            <person name="McDonald L.A."/>
            <person name="Feldblyum T.V."/>
            <person name="Smith H.O."/>
            <person name="Venter J.C."/>
            <person name="Nealson K.H."/>
            <person name="Fraser C.M."/>
        </authorList>
    </citation>
    <scope>NUCLEOTIDE SEQUENCE [LARGE SCALE GENOMIC DNA]</scope>
    <source>
        <strain>ATCC 700550 / JCM 31522 / CIP 106686 / LMG 19005 / NCIMB 14063 / MR-1</strain>
    </source>
</reference>
<evidence type="ECO:0000250" key="1"/>
<evidence type="ECO:0000255" key="2">
    <source>
        <dbReference type="HAMAP-Rule" id="MF_00103"/>
    </source>
</evidence>
<dbReference type="EC" id="3.2.2.23" evidence="2"/>
<dbReference type="EC" id="4.2.99.18" evidence="2"/>
<dbReference type="EMBL" id="AE014299">
    <property type="protein sequence ID" value="AAN57685.1"/>
    <property type="molecule type" value="Genomic_DNA"/>
</dbReference>
<dbReference type="RefSeq" id="NP_720242.1">
    <property type="nucleotide sequence ID" value="NC_004347.2"/>
</dbReference>
<dbReference type="RefSeq" id="WP_011074312.1">
    <property type="nucleotide sequence ID" value="NC_004347.2"/>
</dbReference>
<dbReference type="SMR" id="Q8E8D9"/>
<dbReference type="STRING" id="211586.SO_4726"/>
<dbReference type="PaxDb" id="211586-SO_4726"/>
<dbReference type="KEGG" id="son:SO_4726"/>
<dbReference type="PATRIC" id="fig|211586.12.peg.4583"/>
<dbReference type="eggNOG" id="COG0266">
    <property type="taxonomic scope" value="Bacteria"/>
</dbReference>
<dbReference type="HOGENOM" id="CLU_038423_1_1_6"/>
<dbReference type="OrthoDB" id="9800855at2"/>
<dbReference type="PhylomeDB" id="Q8E8D9"/>
<dbReference type="BioCyc" id="SONE211586:G1GMP-4370-MONOMER"/>
<dbReference type="Proteomes" id="UP000008186">
    <property type="component" value="Chromosome"/>
</dbReference>
<dbReference type="GO" id="GO:0034039">
    <property type="term" value="F:8-oxo-7,8-dihydroguanine DNA N-glycosylase activity"/>
    <property type="evidence" value="ECO:0000318"/>
    <property type="project" value="GO_Central"/>
</dbReference>
<dbReference type="GO" id="GO:0140078">
    <property type="term" value="F:class I DNA-(apurinic or apyrimidinic site) endonuclease activity"/>
    <property type="evidence" value="ECO:0007669"/>
    <property type="project" value="UniProtKB-EC"/>
</dbReference>
<dbReference type="GO" id="GO:0003684">
    <property type="term" value="F:damaged DNA binding"/>
    <property type="evidence" value="ECO:0007669"/>
    <property type="project" value="InterPro"/>
</dbReference>
<dbReference type="GO" id="GO:0003906">
    <property type="term" value="F:DNA-(apurinic or apyrimidinic site) endonuclease activity"/>
    <property type="evidence" value="ECO:0000318"/>
    <property type="project" value="GO_Central"/>
</dbReference>
<dbReference type="GO" id="GO:0008270">
    <property type="term" value="F:zinc ion binding"/>
    <property type="evidence" value="ECO:0007669"/>
    <property type="project" value="UniProtKB-UniRule"/>
</dbReference>
<dbReference type="GO" id="GO:0006284">
    <property type="term" value="P:base-excision repair"/>
    <property type="evidence" value="ECO:0000318"/>
    <property type="project" value="GO_Central"/>
</dbReference>
<dbReference type="CDD" id="cd08966">
    <property type="entry name" value="EcFpg-like_N"/>
    <property type="match status" value="1"/>
</dbReference>
<dbReference type="FunFam" id="1.10.8.50:FF:000003">
    <property type="entry name" value="Formamidopyrimidine-DNA glycosylase"/>
    <property type="match status" value="1"/>
</dbReference>
<dbReference type="FunFam" id="3.20.190.10:FF:000001">
    <property type="entry name" value="Formamidopyrimidine-DNA glycosylase"/>
    <property type="match status" value="1"/>
</dbReference>
<dbReference type="Gene3D" id="1.10.8.50">
    <property type="match status" value="1"/>
</dbReference>
<dbReference type="Gene3D" id="3.20.190.10">
    <property type="entry name" value="MutM-like, N-terminal"/>
    <property type="match status" value="1"/>
</dbReference>
<dbReference type="HAMAP" id="MF_00103">
    <property type="entry name" value="Fapy_DNA_glycosyl"/>
    <property type="match status" value="1"/>
</dbReference>
<dbReference type="InterPro" id="IPR015886">
    <property type="entry name" value="DNA_glyclase/AP_lyase_DNA-bd"/>
</dbReference>
<dbReference type="InterPro" id="IPR015887">
    <property type="entry name" value="DNA_glyclase_Znf_dom_DNA_BS"/>
</dbReference>
<dbReference type="InterPro" id="IPR020629">
    <property type="entry name" value="Formamido-pyr_DNA_Glyclase"/>
</dbReference>
<dbReference type="InterPro" id="IPR012319">
    <property type="entry name" value="FPG_cat"/>
</dbReference>
<dbReference type="InterPro" id="IPR035937">
    <property type="entry name" value="MutM-like_N-ter"/>
</dbReference>
<dbReference type="InterPro" id="IPR010979">
    <property type="entry name" value="Ribosomal_uS13-like_H2TH"/>
</dbReference>
<dbReference type="InterPro" id="IPR000214">
    <property type="entry name" value="Znf_DNA_glyclase/AP_lyase"/>
</dbReference>
<dbReference type="InterPro" id="IPR010663">
    <property type="entry name" value="Znf_FPG/IleRS"/>
</dbReference>
<dbReference type="NCBIfam" id="TIGR00577">
    <property type="entry name" value="fpg"/>
    <property type="match status" value="1"/>
</dbReference>
<dbReference type="NCBIfam" id="NF002211">
    <property type="entry name" value="PRK01103.1"/>
    <property type="match status" value="1"/>
</dbReference>
<dbReference type="PANTHER" id="PTHR22993">
    <property type="entry name" value="FORMAMIDOPYRIMIDINE-DNA GLYCOSYLASE"/>
    <property type="match status" value="1"/>
</dbReference>
<dbReference type="PANTHER" id="PTHR22993:SF9">
    <property type="entry name" value="FORMAMIDOPYRIMIDINE-DNA GLYCOSYLASE"/>
    <property type="match status" value="1"/>
</dbReference>
<dbReference type="Pfam" id="PF01149">
    <property type="entry name" value="Fapy_DNA_glyco"/>
    <property type="match status" value="1"/>
</dbReference>
<dbReference type="Pfam" id="PF06831">
    <property type="entry name" value="H2TH"/>
    <property type="match status" value="1"/>
</dbReference>
<dbReference type="Pfam" id="PF06827">
    <property type="entry name" value="zf-FPG_IleRS"/>
    <property type="match status" value="1"/>
</dbReference>
<dbReference type="SMART" id="SM00898">
    <property type="entry name" value="Fapy_DNA_glyco"/>
    <property type="match status" value="1"/>
</dbReference>
<dbReference type="SMART" id="SM01232">
    <property type="entry name" value="H2TH"/>
    <property type="match status" value="1"/>
</dbReference>
<dbReference type="SUPFAM" id="SSF57716">
    <property type="entry name" value="Glucocorticoid receptor-like (DNA-binding domain)"/>
    <property type="match status" value="1"/>
</dbReference>
<dbReference type="SUPFAM" id="SSF81624">
    <property type="entry name" value="N-terminal domain of MutM-like DNA repair proteins"/>
    <property type="match status" value="1"/>
</dbReference>
<dbReference type="SUPFAM" id="SSF46946">
    <property type="entry name" value="S13-like H2TH domain"/>
    <property type="match status" value="1"/>
</dbReference>
<dbReference type="PROSITE" id="PS51068">
    <property type="entry name" value="FPG_CAT"/>
    <property type="match status" value="1"/>
</dbReference>
<dbReference type="PROSITE" id="PS01242">
    <property type="entry name" value="ZF_FPG_1"/>
    <property type="match status" value="1"/>
</dbReference>
<dbReference type="PROSITE" id="PS51066">
    <property type="entry name" value="ZF_FPG_2"/>
    <property type="match status" value="1"/>
</dbReference>
<accession>Q8E8D9</accession>
<sequence length="271" mass="29955">MPELPEVEVTRQGITPYLVDQTVVDLIVRNPSLRWPVPELAKQIIGQTIRQVRRRAKYLLIDTDAGTSIVHLGMSGSLRILPHDTPVEKHDHIDLVLANGRILRFNDPRRFGAWLWCQLPEEAHPLLEKLGPEPLTDAFNVNQLAASLAGKKKAIKLCLMDNHIVVGVGNIYANEALFAAGIHPEAEAGKIDIERLTVLVAEVKQILAHAIKQGGTTLKDFTNADGKPGYFAQKLHVYGRGGETCTQCGNLLSEIRLGQRTTVFCSICQPR</sequence>
<keyword id="KW-0227">DNA damage</keyword>
<keyword id="KW-0234">DNA repair</keyword>
<keyword id="KW-0238">DNA-binding</keyword>
<keyword id="KW-0326">Glycosidase</keyword>
<keyword id="KW-0378">Hydrolase</keyword>
<keyword id="KW-0456">Lyase</keyword>
<keyword id="KW-0479">Metal-binding</keyword>
<keyword id="KW-0511">Multifunctional enzyme</keyword>
<keyword id="KW-1185">Reference proteome</keyword>
<keyword id="KW-0862">Zinc</keyword>
<keyword id="KW-0863">Zinc-finger</keyword>
<gene>
    <name evidence="2" type="primary">mutM</name>
    <name evidence="2" type="synonym">fpg</name>
    <name type="ordered locus">SO_4726</name>
</gene>
<feature type="initiator methionine" description="Removed" evidence="1">
    <location>
        <position position="1"/>
    </location>
</feature>
<feature type="chain" id="PRO_0000170862" description="Formamidopyrimidine-DNA glycosylase">
    <location>
        <begin position="2"/>
        <end position="271"/>
    </location>
</feature>
<feature type="zinc finger region" description="FPG-type" evidence="2">
    <location>
        <begin position="236"/>
        <end position="270"/>
    </location>
</feature>
<feature type="active site" description="Schiff-base intermediate with DNA" evidence="2">
    <location>
        <position position="2"/>
    </location>
</feature>
<feature type="active site" description="Proton donor" evidence="2">
    <location>
        <position position="3"/>
    </location>
</feature>
<feature type="active site" description="Proton donor; for beta-elimination activity" evidence="2">
    <location>
        <position position="57"/>
    </location>
</feature>
<feature type="active site" description="Proton donor; for delta-elimination activity" evidence="2">
    <location>
        <position position="260"/>
    </location>
</feature>
<feature type="binding site" evidence="2">
    <location>
        <position position="90"/>
    </location>
    <ligand>
        <name>DNA</name>
        <dbReference type="ChEBI" id="CHEBI:16991"/>
    </ligand>
</feature>
<feature type="binding site" evidence="2">
    <location>
        <position position="109"/>
    </location>
    <ligand>
        <name>DNA</name>
        <dbReference type="ChEBI" id="CHEBI:16991"/>
    </ligand>
</feature>
<feature type="binding site" evidence="2">
    <location>
        <position position="151"/>
    </location>
    <ligand>
        <name>DNA</name>
        <dbReference type="ChEBI" id="CHEBI:16991"/>
    </ligand>
</feature>